<gene>
    <name type="primary">PITX1</name>
    <name type="synonym">BFT</name>
    <name type="synonym">PTX1</name>
</gene>
<name>PITX1_HUMAN</name>
<comment type="function">
    <text evidence="2">Sequence-specific transcription factor that binds gene promoters and activates their transcription. May play a role in the development of anterior structures, and in particular, the brain and facies and in specifying the identity or structure of hindlimb.</text>
</comment>
<comment type="subunit">
    <text evidence="13">Interacts with POU1F1 (PubMed:26612202).</text>
</comment>
<comment type="interaction">
    <interactant intactId="EBI-748265">
        <id>P78337</id>
    </interactant>
    <interactant intactId="EBI-12318443">
        <id>Q8NFV4-4</id>
        <label>ABHD11</label>
    </interactant>
    <organismsDiffer>false</organismsDiffer>
    <experiments>3</experiments>
</comment>
<comment type="interaction">
    <interactant intactId="EBI-748265">
        <id>P78337</id>
    </interactant>
    <interactant intactId="EBI-11976299">
        <id>Q5BKX5-3</id>
        <label>ACTMAP</label>
    </interactant>
    <organismsDiffer>false</organismsDiffer>
    <experiments>3</experiments>
</comment>
<comment type="interaction">
    <interactant intactId="EBI-748265">
        <id>P78337</id>
    </interactant>
    <interactant intactId="EBI-357530">
        <id>Q9ULX6</id>
        <label>AKAP8L</label>
    </interactant>
    <organismsDiffer>false</organismsDiffer>
    <experiments>3</experiments>
</comment>
<comment type="interaction">
    <interactant intactId="EBI-748265">
        <id>P78337</id>
    </interactant>
    <interactant intactId="EBI-12102070">
        <id>Q9NXR5-2</id>
        <label>ANKRD10</label>
    </interactant>
    <organismsDiffer>false</organismsDiffer>
    <experiments>3</experiments>
</comment>
<comment type="interaction">
    <interactant intactId="EBI-748265">
        <id>P78337</id>
    </interactant>
    <interactant intactId="EBI-21535880">
        <id>Q92870-2</id>
        <label>APBB2</label>
    </interactant>
    <organismsDiffer>false</organismsDiffer>
    <experiments>3</experiments>
</comment>
<comment type="interaction">
    <interactant intactId="EBI-748265">
        <id>P78337</id>
    </interactant>
    <interactant intactId="EBI-948603">
        <id>Q03989</id>
        <label>ARID5A</label>
    </interactant>
    <organismsDiffer>false</organismsDiffer>
    <experiments>3</experiments>
</comment>
<comment type="interaction">
    <interactant intactId="EBI-748265">
        <id>P78337</id>
    </interactant>
    <interactant intactId="EBI-11954292">
        <id>Q86V38</id>
        <label>ATN1</label>
    </interactant>
    <organismsDiffer>false</organismsDiffer>
    <experiments>3</experiments>
</comment>
<comment type="interaction">
    <interactant intactId="EBI-748265">
        <id>P78337</id>
    </interactant>
    <interactant intactId="EBI-953896">
        <id>Q9NP55</id>
        <label>BPIFA1</label>
    </interactant>
    <organismsDiffer>false</organismsDiffer>
    <experiments>5</experiments>
</comment>
<comment type="interaction">
    <interactant intactId="EBI-748265">
        <id>P78337</id>
    </interactant>
    <interactant intactId="EBI-12809220">
        <id>Q5SWW7</id>
        <label>C10orf55</label>
    </interactant>
    <organismsDiffer>false</organismsDiffer>
    <experiments>3</experiments>
</comment>
<comment type="interaction">
    <interactant intactId="EBI-748265">
        <id>P78337</id>
    </interactant>
    <interactant intactId="EBI-18101667">
        <id>Q5W0N0-2</id>
        <label>C9orf57</label>
    </interactant>
    <organismsDiffer>false</organismsDiffer>
    <experiments>3</experiments>
</comment>
<comment type="interaction">
    <interactant intactId="EBI-748265">
        <id>P78337</id>
    </interactant>
    <interactant intactId="EBI-4314501">
        <id>P40199</id>
        <label>CEACAM6</label>
    </interactant>
    <organismsDiffer>false</organismsDiffer>
    <experiments>3</experiments>
</comment>
<comment type="interaction">
    <interactant intactId="EBI-748265">
        <id>P78337</id>
    </interactant>
    <interactant intactId="EBI-718615">
        <id>Q9H5F2</id>
        <label>CFAP68</label>
    </interactant>
    <organismsDiffer>false</organismsDiffer>
    <experiments>5</experiments>
</comment>
<comment type="interaction">
    <interactant intactId="EBI-748265">
        <id>P78337</id>
    </interactant>
    <interactant intactId="EBI-3867333">
        <id>A8MQ03</id>
        <label>CYSRT1</label>
    </interactant>
    <organismsDiffer>false</organismsDiffer>
    <experiments>3</experiments>
</comment>
<comment type="interaction">
    <interactant intactId="EBI-748265">
        <id>P78337</id>
    </interactant>
    <interactant intactId="EBI-12091947">
        <id>O75935-2</id>
        <label>DCTN3</label>
    </interactant>
    <organismsDiffer>false</organismsDiffer>
    <experiments>3</experiments>
</comment>
<comment type="interaction">
    <interactant intactId="EBI-748265">
        <id>P78337</id>
    </interactant>
    <interactant intactId="EBI-739789">
        <id>Q92997</id>
        <label>DVL3</label>
    </interactant>
    <organismsDiffer>false</organismsDiffer>
    <experiments>4</experiments>
</comment>
<comment type="interaction">
    <interactant intactId="EBI-748265">
        <id>P78337</id>
    </interactant>
    <interactant intactId="EBI-948630">
        <id>Q86Y13</id>
        <label>DZIP3</label>
    </interactant>
    <organismsDiffer>false</organismsDiffer>
    <experiments>3</experiments>
</comment>
<comment type="interaction">
    <interactant intactId="EBI-748265">
        <id>P78337</id>
    </interactant>
    <interactant intactId="EBI-743414">
        <id>O95967</id>
        <label>EFEMP2</label>
    </interactant>
    <organismsDiffer>false</organismsDiffer>
    <experiments>3</experiments>
</comment>
<comment type="interaction">
    <interactant intactId="EBI-748265">
        <id>P78337</id>
    </interactant>
    <interactant intactId="EBI-11978259">
        <id>Q92567-2</id>
        <label>FAM168A</label>
    </interactant>
    <organismsDiffer>false</organismsDiffer>
    <experiments>3</experiments>
</comment>
<comment type="interaction">
    <interactant intactId="EBI-748265">
        <id>P78337</id>
    </interactant>
    <interactant intactId="EBI-12193763">
        <id>A1KXE4-2</id>
        <label>FAM168B</label>
    </interactant>
    <organismsDiffer>false</organismsDiffer>
    <experiments>3</experiments>
</comment>
<comment type="interaction">
    <interactant intactId="EBI-748265">
        <id>P78337</id>
    </interactant>
    <interactant intactId="EBI-9090198">
        <id>P15976-2</id>
        <label>GATA1</label>
    </interactant>
    <organismsDiffer>false</organismsDiffer>
    <experiments>3</experiments>
</comment>
<comment type="interaction">
    <interactant intactId="EBI-748265">
        <id>P78337</id>
    </interactant>
    <interactant intactId="EBI-618309">
        <id>Q08379</id>
        <label>GOLGA2</label>
    </interactant>
    <organismsDiffer>false</organismsDiffer>
    <experiments>3</experiments>
</comment>
<comment type="interaction">
    <interactant intactId="EBI-748265">
        <id>P78337</id>
    </interactant>
    <interactant intactId="EBI-740785">
        <id>P49639</id>
        <label>HOXA1</label>
    </interactant>
    <organismsDiffer>false</organismsDiffer>
    <experiments>5</experiments>
</comment>
<comment type="interaction">
    <interactant intactId="EBI-748265">
        <id>P78337</id>
    </interactant>
    <interactant intactId="EBI-12056251">
        <id>Q9ULV5-2</id>
        <label>HSF4</label>
    </interactant>
    <organismsDiffer>false</organismsDiffer>
    <experiments>3</experiments>
</comment>
<comment type="interaction">
    <interactant intactId="EBI-748265">
        <id>P78337</id>
    </interactant>
    <interactant intactId="EBI-18115692">
        <id>Q6UWQ7-2</id>
        <label>IGFL2</label>
    </interactant>
    <organismsDiffer>false</organismsDiffer>
    <experiments>3</experiments>
</comment>
<comment type="interaction">
    <interactant intactId="EBI-748265">
        <id>P78337</id>
    </interactant>
    <interactant intactId="EBI-747310">
        <id>O94829</id>
        <label>IPO13</label>
    </interactant>
    <organismsDiffer>false</organismsDiffer>
    <experiments>4</experiments>
</comment>
<comment type="interaction">
    <interactant intactId="EBI-748265">
        <id>P78337</id>
    </interactant>
    <interactant intactId="EBI-724915">
        <id>Q53HC5</id>
        <label>KLHL26</label>
    </interactant>
    <organismsDiffer>false</organismsDiffer>
    <experiments>3</experiments>
</comment>
<comment type="interaction">
    <interactant intactId="EBI-748265">
        <id>P78337</id>
    </interactant>
    <interactant intactId="EBI-1047093">
        <id>O76011</id>
        <label>KRT34</label>
    </interactant>
    <organismsDiffer>false</organismsDiffer>
    <experiments>3</experiments>
</comment>
<comment type="interaction">
    <interactant intactId="EBI-748265">
        <id>P78337</id>
    </interactant>
    <interactant intactId="EBI-10221390">
        <id>P78385</id>
        <label>KRT83</label>
    </interactant>
    <organismsDiffer>false</organismsDiffer>
    <experiments>3</experiments>
</comment>
<comment type="interaction">
    <interactant intactId="EBI-748265">
        <id>P78337</id>
    </interactant>
    <interactant intactId="EBI-11953846">
        <id>Q52LG2</id>
        <label>KRTAP13-2</label>
    </interactant>
    <organismsDiffer>false</organismsDiffer>
    <experiments>3</experiments>
</comment>
<comment type="interaction">
    <interactant intactId="EBI-748265">
        <id>P78337</id>
    </interactant>
    <interactant intactId="EBI-1048945">
        <id>Q3LI72</id>
        <label>KRTAP19-5</label>
    </interactant>
    <organismsDiffer>false</organismsDiffer>
    <experiments>3</experiments>
</comment>
<comment type="interaction">
    <interactant intactId="EBI-748265">
        <id>P78337</id>
    </interactant>
    <interactant intactId="EBI-10241353">
        <id>Q3SYF9</id>
        <label>KRTAP19-7</label>
    </interactant>
    <organismsDiffer>false</organismsDiffer>
    <experiments>3</experiments>
</comment>
<comment type="interaction">
    <interactant intactId="EBI-748265">
        <id>P78337</id>
    </interactant>
    <interactant intactId="EBI-3957672">
        <id>Q6PEX3</id>
        <label>KRTAP26-1</label>
    </interactant>
    <organismsDiffer>false</organismsDiffer>
    <experiments>3</experiments>
</comment>
<comment type="interaction">
    <interactant intactId="EBI-748265">
        <id>P78337</id>
    </interactant>
    <interactant intactId="EBI-3957694">
        <id>Q9BYR6</id>
        <label>KRTAP3-3</label>
    </interactant>
    <organismsDiffer>false</organismsDiffer>
    <experiments>3</experiments>
</comment>
<comment type="interaction">
    <interactant intactId="EBI-748265">
        <id>P78337</id>
    </interactant>
    <interactant intactId="EBI-12111050">
        <id>Q3LI64</id>
        <label>KRTAP6-1</label>
    </interactant>
    <organismsDiffer>false</organismsDiffer>
    <experiments>3</experiments>
</comment>
<comment type="interaction">
    <interactant intactId="EBI-748265">
        <id>P78337</id>
    </interactant>
    <interactant intactId="EBI-11962084">
        <id>Q3LI66</id>
        <label>KRTAP6-2</label>
    </interactant>
    <organismsDiffer>false</organismsDiffer>
    <experiments>5</experiments>
</comment>
<comment type="interaction">
    <interactant intactId="EBI-748265">
        <id>P78337</id>
    </interactant>
    <interactant intactId="EBI-22311199">
        <id>Q3LI67</id>
        <label>KRTAP6-3</label>
    </interactant>
    <organismsDiffer>false</organismsDiffer>
    <experiments>3</experiments>
</comment>
<comment type="interaction">
    <interactant intactId="EBI-748265">
        <id>P78337</id>
    </interactant>
    <interactant intactId="EBI-18394498">
        <id>Q8IUC3</id>
        <label>KRTAP7-1</label>
    </interactant>
    <organismsDiffer>false</organismsDiffer>
    <experiments>3</experiments>
</comment>
<comment type="interaction">
    <interactant intactId="EBI-748265">
        <id>P78337</id>
    </interactant>
    <interactant intactId="EBI-10261141">
        <id>Q8IUC2</id>
        <label>KRTAP8-1</label>
    </interactant>
    <organismsDiffer>false</organismsDiffer>
    <experiments>3</experiments>
</comment>
<comment type="interaction">
    <interactant intactId="EBI-748265">
        <id>P78337</id>
    </interactant>
    <interactant intactId="EBI-9088686">
        <id>Q14847-2</id>
        <label>LASP1</label>
    </interactant>
    <organismsDiffer>false</organismsDiffer>
    <experiments>5</experiments>
</comment>
<comment type="interaction">
    <interactant intactId="EBI-748265">
        <id>P78337</id>
    </interactant>
    <interactant intactId="EBI-716006">
        <id>Q9Y5V3</id>
        <label>MAGED1</label>
    </interactant>
    <organismsDiffer>false</organismsDiffer>
    <experiments>4</experiments>
</comment>
<comment type="interaction">
    <interactant intactId="EBI-748265">
        <id>P78337</id>
    </interactant>
    <interactant intactId="EBI-724076">
        <id>Q99750</id>
        <label>MDFI</label>
    </interactant>
    <organismsDiffer>false</organismsDiffer>
    <experiments>3</experiments>
</comment>
<comment type="interaction">
    <interactant intactId="EBI-748265">
        <id>P78337</id>
    </interactant>
    <interactant intactId="EBI-8487781">
        <id>Q8N6F8</id>
        <label>METTL27</label>
    </interactant>
    <organismsDiffer>false</organismsDiffer>
    <experiments>5</experiments>
</comment>
<comment type="interaction">
    <interactant intactId="EBI-748265">
        <id>P78337</id>
    </interactant>
    <interactant intactId="EBI-6447480">
        <id>P35548</id>
        <label>MSX2</label>
    </interactant>
    <organismsDiffer>false</organismsDiffer>
    <experiments>3</experiments>
</comment>
<comment type="interaction">
    <interactant intactId="EBI-748265">
        <id>P78337</id>
    </interactant>
    <interactant intactId="EBI-12813813">
        <id>A7E2Y1-2</id>
        <label>MYH7B</label>
    </interactant>
    <organismsDiffer>false</organismsDiffer>
    <experiments>3</experiments>
</comment>
<comment type="interaction">
    <interactant intactId="EBI-748265">
        <id>P78337</id>
    </interactant>
    <interactant intactId="EBI-5662487">
        <id>Q8TDC0</id>
        <label>MYOZ3</label>
    </interactant>
    <organismsDiffer>false</organismsDiffer>
    <experiments>3</experiments>
</comment>
<comment type="interaction">
    <interactant intactId="EBI-748265">
        <id>P78337</id>
    </interactant>
    <interactant intactId="EBI-12868744">
        <id>P0CG21</id>
        <label>NHLRC4</label>
    </interactant>
    <organismsDiffer>false</organismsDiffer>
    <experiments>5</experiments>
</comment>
<comment type="interaction">
    <interactant intactId="EBI-748265">
        <id>P78337</id>
    </interactant>
    <interactant intactId="EBI-10261509">
        <id>Q8IV28</id>
        <label>NID2</label>
    </interactant>
    <organismsDiffer>false</organismsDiffer>
    <experiments>3</experiments>
</comment>
<comment type="interaction">
    <interactant intactId="EBI-748265">
        <id>P78337</id>
    </interactant>
    <interactant intactId="EBI-357275">
        <id>Q99471</id>
        <label>PFDN5</label>
    </interactant>
    <organismsDiffer>false</organismsDiffer>
    <experiments>3</experiments>
</comment>
<comment type="interaction">
    <interactant intactId="EBI-748265">
        <id>P78337</id>
    </interactant>
    <interactant intactId="EBI-726466">
        <id>O15496</id>
        <label>PLA2G10</label>
    </interactant>
    <organismsDiffer>false</organismsDiffer>
    <experiments>3</experiments>
</comment>
<comment type="interaction">
    <interactant intactId="EBI-748265">
        <id>P78337</id>
    </interactant>
    <interactant intactId="EBI-373552">
        <id>Q96CS7</id>
        <label>PLEKHB2</label>
    </interactant>
    <organismsDiffer>false</organismsDiffer>
    <experiments>3</experiments>
</comment>
<comment type="interaction">
    <interactant intactId="EBI-748265">
        <id>P78337</id>
    </interactant>
    <interactant intactId="EBI-750734">
        <id>Q9NRY6</id>
        <label>PLSCR3</label>
    </interactant>
    <organismsDiffer>false</organismsDiffer>
    <experiments>3</experiments>
</comment>
<comment type="interaction">
    <interactant intactId="EBI-748265">
        <id>P78337</id>
    </interactant>
    <interactant intactId="EBI-12754095">
        <id>P86480</id>
        <label>PRR20D</label>
    </interactant>
    <organismsDiffer>false</organismsDiffer>
    <experiments>3</experiments>
</comment>
<comment type="interaction">
    <interactant intactId="EBI-748265">
        <id>P78337</id>
    </interactant>
    <interactant intactId="EBI-19951687">
        <id>A5LHX3</id>
        <label>PSMB11</label>
    </interactant>
    <organismsDiffer>false</organismsDiffer>
    <experiments>3</experiments>
</comment>
<comment type="interaction">
    <interactant intactId="EBI-748265">
        <id>P78337</id>
    </interactant>
    <interactant intactId="EBI-1383632">
        <id>Q13882</id>
        <label>PTK6</label>
    </interactant>
    <organismsDiffer>false</organismsDiffer>
    <experiments>3</experiments>
</comment>
<comment type="interaction">
    <interactant intactId="EBI-748265">
        <id>P78337</id>
    </interactant>
    <interactant intactId="EBI-740322">
        <id>Q93062</id>
        <label>RBPMS</label>
    </interactant>
    <organismsDiffer>false</organismsDiffer>
    <experiments>6</experiments>
</comment>
<comment type="interaction">
    <interactant intactId="EBI-748265">
        <id>P78337</id>
    </interactant>
    <interactant intactId="EBI-740343">
        <id>Q93062-3</id>
        <label>RBPMS</label>
    </interactant>
    <organismsDiffer>false</organismsDiffer>
    <experiments>4</experiments>
</comment>
<comment type="interaction">
    <interactant intactId="EBI-748265">
        <id>P78337</id>
    </interactant>
    <interactant intactId="EBI-6422642">
        <id>Q01974</id>
        <label>ROR2</label>
    </interactant>
    <organismsDiffer>false</organismsDiffer>
    <experiments>3</experiments>
</comment>
<comment type="interaction">
    <interactant intactId="EBI-748265">
        <id>P78337</id>
    </interactant>
    <interactant intactId="EBI-465368">
        <id>Q9UGK8</id>
        <label>SERGEF</label>
    </interactant>
    <organismsDiffer>false</organismsDiffer>
    <experiments>3</experiments>
</comment>
<comment type="interaction">
    <interactant intactId="EBI-748265">
        <id>P78337</id>
    </interactant>
    <interactant intactId="EBI-953978">
        <id>P05121</id>
        <label>SERPINE1</label>
    </interactant>
    <organismsDiffer>false</organismsDiffer>
    <experiments>3</experiments>
</comment>
<comment type="interaction">
    <interactant intactId="EBI-748265">
        <id>P78337</id>
    </interactant>
    <interactant intactId="EBI-22345187">
        <id>A0A0B4J2F2</id>
        <label>SIK1B</label>
    </interactant>
    <organismsDiffer>false</organismsDiffer>
    <experiments>3</experiments>
</comment>
<comment type="interaction">
    <interactant intactId="EBI-748265">
        <id>P78337</id>
    </interactant>
    <interactant intactId="EBI-12806032">
        <id>Q16348</id>
        <label>SLC15A2</label>
    </interactant>
    <organismsDiffer>false</organismsDiffer>
    <experiments>3</experiments>
</comment>
<comment type="interaction">
    <interactant intactId="EBI-748265">
        <id>P78337</id>
    </interactant>
    <interactant intactId="EBI-11959123">
        <id>Q99932-2</id>
        <label>SPAG8</label>
    </interactant>
    <organismsDiffer>false</organismsDiffer>
    <experiments>4</experiments>
</comment>
<comment type="interaction">
    <interactant intactId="EBI-748265">
        <id>P78337</id>
    </interactant>
    <interactant intactId="EBI-12843506">
        <id>Q8IWL8</id>
        <label>STH</label>
    </interactant>
    <organismsDiffer>false</organismsDiffer>
    <experiments>3</experiments>
</comment>
<comment type="interaction">
    <interactant intactId="EBI-748265">
        <id>P78337</id>
    </interactant>
    <interactant intactId="EBI-12096770">
        <id>O60806</id>
        <label>TBX19</label>
    </interactant>
    <organismsDiffer>false</organismsDiffer>
    <experiments>3</experiments>
</comment>
<comment type="interaction">
    <interactant intactId="EBI-748265">
        <id>P78337</id>
    </interactant>
    <interactant intactId="EBI-6427217">
        <id>Q9Y458</id>
        <label>TBX22</label>
    </interactant>
    <organismsDiffer>false</organismsDiffer>
    <experiments>3</experiments>
</comment>
<comment type="interaction">
    <interactant intactId="EBI-748265">
        <id>P78337</id>
    </interactant>
    <interactant intactId="EBI-10239812">
        <id>Q96M29</id>
        <label>TEKT5</label>
    </interactant>
    <organismsDiffer>false</organismsDiffer>
    <experiments>5</experiments>
</comment>
<comment type="interaction">
    <interactant intactId="EBI-748265">
        <id>P78337</id>
    </interactant>
    <interactant intactId="EBI-11952651">
        <id>Q7Z6R9</id>
        <label>TFAP2D</label>
    </interactant>
    <organismsDiffer>false</organismsDiffer>
    <experiments>3</experiments>
</comment>
<comment type="interaction">
    <interactant intactId="EBI-748265">
        <id>P78337</id>
    </interactant>
    <interactant intactId="EBI-11741437">
        <id>Q08117-2</id>
        <label>TLE5</label>
    </interactant>
    <organismsDiffer>false</organismsDiffer>
    <experiments>8</experiments>
</comment>
<comment type="interaction">
    <interactant intactId="EBI-748265">
        <id>P78337</id>
    </interactant>
    <interactant intactId="EBI-396540">
        <id>Q12888</id>
        <label>TP53BP1</label>
    </interactant>
    <organismsDiffer>false</organismsDiffer>
    <experiments>3</experiments>
</comment>
<comment type="interaction">
    <interactant intactId="EBI-748265">
        <id>P78337</id>
    </interactant>
    <interactant intactId="EBI-359224">
        <id>Q13077</id>
        <label>TRAF1</label>
    </interactant>
    <organismsDiffer>false</organismsDiffer>
    <experiments>3</experiments>
</comment>
<comment type="interaction">
    <interactant intactId="EBI-748265">
        <id>P78337</id>
    </interactant>
    <interactant intactId="EBI-740098">
        <id>P36406</id>
        <label>TRIM23</label>
    </interactant>
    <organismsDiffer>false</organismsDiffer>
    <experiments>4</experiments>
</comment>
<comment type="interaction">
    <interactant intactId="EBI-748265">
        <id>P78337</id>
    </interactant>
    <interactant intactId="EBI-12806590">
        <id>Q86WV8</id>
        <label>TSC1</label>
    </interactant>
    <organismsDiffer>false</organismsDiffer>
    <experiments>3</experiments>
</comment>
<comment type="interaction">
    <interactant intactId="EBI-748265">
        <id>P78337</id>
    </interactant>
    <interactant intactId="EBI-12068150">
        <id>Q6NVU6</id>
        <label>UFSP1</label>
    </interactant>
    <organismsDiffer>false</organismsDiffer>
    <experiments>3</experiments>
</comment>
<comment type="interaction">
    <interactant intactId="EBI-748265">
        <id>P78337</id>
    </interactant>
    <interactant intactId="EBI-11957216">
        <id>A8MV65-2</id>
        <label>VGLL3</label>
    </interactant>
    <organismsDiffer>false</organismsDiffer>
    <experiments>3</experiments>
</comment>
<comment type="interaction">
    <interactant intactId="EBI-748265">
        <id>P78337</id>
    </interactant>
    <interactant intactId="EBI-10188476">
        <id>A0A0C4DGF1</id>
        <label>ZBTB32</label>
    </interactant>
    <organismsDiffer>false</organismsDiffer>
    <experiments>6</experiments>
</comment>
<comment type="interaction">
    <interactant intactId="EBI-748265">
        <id>P78337</id>
    </interactant>
    <interactant intactId="EBI-10177989">
        <id>G4XUV3</id>
    </interactant>
    <organismsDiffer>false</organismsDiffer>
    <experiments>3</experiments>
</comment>
<comment type="subcellular location">
    <subcellularLocation>
        <location>Nucleus</location>
    </subcellularLocation>
</comment>
<comment type="disease" evidence="10 11">
    <disease id="DI-01396">
        <name>Clubfoot, congenital, with or without deficiency of long bones and/or mirror-image polydactyly</name>
        <acronym>CCF</acronym>
        <description>A congenital limb deformity defined as fixation of the foot in cavus, adductus, varus, and equinus (i.e., inclined inwards, axially rotated outwards, and pointing downwards) with concomitant soft tissue abnormalities. Clubfoot may occur in isolation or as part of a syndrome. Some patients present tibial hemimelia, bilateral patellar hypoplasia, and preaxial mirror-image polydactyly.</description>
        <dbReference type="MIM" id="119800"/>
    </disease>
    <text>The disease is caused by variants affecting the gene represented in this entry.</text>
</comment>
<comment type="disease" evidence="12">
    <disease id="DI-03623">
        <name>Liebenberg syndrome</name>
        <acronym>LBNBG</acronym>
        <description>An upper limb-malformation syndrome characterized by the combination of dysplastic elbow joints and the fusion of wrist bones with consequent radial deviation.</description>
        <dbReference type="MIM" id="186550"/>
    </disease>
    <text evidence="12">The gene represented in this entry is involved in disease pathogenesis. A chromosomal aberration involving the PITX1 locus results in LBNBG. Translocation t(5;18)(q31.1;q12.3). Additionally, two chromosome 5 deletions located 5'of PITX1 have been found in LBNBG patients. These structural variations cause altered expression of PITX1 in the forelimb via the activation of ectopic enhancers (PubMed:23022097).</text>
</comment>
<comment type="similarity">
    <text evidence="14">Belongs to the paired homeobox family. Bicoid subfamily.</text>
</comment>
<accession>P78337</accession>
<accession>A8K3M0</accession>
<accession>D3DQB0</accession>
<accession>O14677</accession>
<accession>O60425</accession>
<accession>Q9BTI5</accession>
<proteinExistence type="evidence at protein level"/>
<keyword id="KW-0007">Acetylation</keyword>
<keyword id="KW-0010">Activator</keyword>
<keyword id="KW-0217">Developmental protein</keyword>
<keyword id="KW-0225">Disease variant</keyword>
<keyword id="KW-0238">DNA-binding</keyword>
<keyword id="KW-0371">Homeobox</keyword>
<keyword id="KW-0539">Nucleus</keyword>
<keyword id="KW-0597">Phosphoprotein</keyword>
<keyword id="KW-1267">Proteomics identification</keyword>
<keyword id="KW-1185">Reference proteome</keyword>
<keyword id="KW-0804">Transcription</keyword>
<keyword id="KW-0805">Transcription regulation</keyword>
<protein>
    <recommendedName>
        <fullName>Pituitary homeobox 1</fullName>
    </recommendedName>
    <alternativeName>
        <fullName>Hindlimb-expressed homeobox protein backfoot</fullName>
    </alternativeName>
    <alternativeName>
        <fullName>Homeobox protein PITX1</fullName>
    </alternativeName>
    <alternativeName>
        <fullName>Paired-like homeodomain transcription factor 1</fullName>
    </alternativeName>
</protein>
<dbReference type="EMBL" id="U70370">
    <property type="protein sequence ID" value="AAC51126.1"/>
    <property type="molecule type" value="mRNA"/>
</dbReference>
<dbReference type="EMBL" id="AF009650">
    <property type="protein sequence ID" value="AAB65251.1"/>
    <property type="molecule type" value="Genomic_DNA"/>
</dbReference>
<dbReference type="EMBL" id="AF009648">
    <property type="protein sequence ID" value="AAB65251.1"/>
    <property type="status" value="JOINED"/>
    <property type="molecule type" value="Genomic_DNA"/>
</dbReference>
<dbReference type="EMBL" id="AF009649">
    <property type="protein sequence ID" value="AAB65251.1"/>
    <property type="status" value="JOINED"/>
    <property type="molecule type" value="Genomic_DNA"/>
</dbReference>
<dbReference type="EMBL" id="AK290635">
    <property type="protein sequence ID" value="BAF83324.1"/>
    <property type="molecule type" value="mRNA"/>
</dbReference>
<dbReference type="EMBL" id="AC004764">
    <property type="protein sequence ID" value="AAC17733.1"/>
    <property type="molecule type" value="Genomic_DNA"/>
</dbReference>
<dbReference type="EMBL" id="AC008406">
    <property type="status" value="NOT_ANNOTATED_CDS"/>
    <property type="molecule type" value="Genomic_DNA"/>
</dbReference>
<dbReference type="EMBL" id="CH471062">
    <property type="protein sequence ID" value="EAW62226.1"/>
    <property type="molecule type" value="Genomic_DNA"/>
</dbReference>
<dbReference type="EMBL" id="CH471062">
    <property type="protein sequence ID" value="EAW62227.1"/>
    <property type="molecule type" value="Genomic_DNA"/>
</dbReference>
<dbReference type="EMBL" id="BC009412">
    <property type="protein sequence ID" value="AAH09412.1"/>
    <property type="molecule type" value="mRNA"/>
</dbReference>
<dbReference type="EMBL" id="BC003685">
    <property type="protein sequence ID" value="AAH03685.1"/>
    <property type="molecule type" value="mRNA"/>
</dbReference>
<dbReference type="CCDS" id="CCDS4182.1"/>
<dbReference type="RefSeq" id="NP_002644.4">
    <property type="nucleotide sequence ID" value="NM_002653.4"/>
</dbReference>
<dbReference type="SMR" id="P78337"/>
<dbReference type="BioGRID" id="111324">
    <property type="interactions" value="122"/>
</dbReference>
<dbReference type="FunCoup" id="P78337">
    <property type="interactions" value="837"/>
</dbReference>
<dbReference type="IntAct" id="P78337">
    <property type="interactions" value="97"/>
</dbReference>
<dbReference type="STRING" id="9606.ENSP00000265340"/>
<dbReference type="GlyCosmos" id="P78337">
    <property type="glycosylation" value="1 site, 1 glycan"/>
</dbReference>
<dbReference type="GlyGen" id="P78337">
    <property type="glycosylation" value="4 sites, 1 N-linked glycan (1 site), 1 O-linked glycan (2 sites)"/>
</dbReference>
<dbReference type="iPTMnet" id="P78337"/>
<dbReference type="PhosphoSitePlus" id="P78337"/>
<dbReference type="BioMuta" id="PITX1"/>
<dbReference type="DMDM" id="108935922"/>
<dbReference type="jPOST" id="P78337"/>
<dbReference type="MassIVE" id="P78337"/>
<dbReference type="PaxDb" id="9606-ENSP00000265340"/>
<dbReference type="PeptideAtlas" id="P78337"/>
<dbReference type="ProteomicsDB" id="57573"/>
<dbReference type="Pumba" id="P78337"/>
<dbReference type="ABCD" id="P78337">
    <property type="antibodies" value="1 sequenced antibody"/>
</dbReference>
<dbReference type="Antibodypedia" id="14722">
    <property type="antibodies" value="233 antibodies from 33 providers"/>
</dbReference>
<dbReference type="DNASU" id="5307"/>
<dbReference type="Ensembl" id="ENST00000265340.12">
    <property type="protein sequence ID" value="ENSP00000265340.6"/>
    <property type="gene ID" value="ENSG00000069011.16"/>
</dbReference>
<dbReference type="Ensembl" id="ENST00000506438.5">
    <property type="protein sequence ID" value="ENSP00000427542.1"/>
    <property type="gene ID" value="ENSG00000069011.16"/>
</dbReference>
<dbReference type="GeneID" id="5307"/>
<dbReference type="KEGG" id="hsa:5307"/>
<dbReference type="MANE-Select" id="ENST00000265340.12">
    <property type="protein sequence ID" value="ENSP00000265340.6"/>
    <property type="RefSeq nucleotide sequence ID" value="NM_002653.5"/>
    <property type="RefSeq protein sequence ID" value="NP_002644.4"/>
</dbReference>
<dbReference type="AGR" id="HGNC:9004"/>
<dbReference type="CTD" id="5307"/>
<dbReference type="DisGeNET" id="5307"/>
<dbReference type="GeneCards" id="PITX1"/>
<dbReference type="HGNC" id="HGNC:9004">
    <property type="gene designation" value="PITX1"/>
</dbReference>
<dbReference type="HPA" id="ENSG00000069011">
    <property type="expression patterns" value="Tissue enhanced (esophagus, vagina)"/>
</dbReference>
<dbReference type="MalaCards" id="PITX1"/>
<dbReference type="MIM" id="119800">
    <property type="type" value="phenotype"/>
</dbReference>
<dbReference type="MIM" id="186550">
    <property type="type" value="phenotype"/>
</dbReference>
<dbReference type="MIM" id="602149">
    <property type="type" value="gene"/>
</dbReference>
<dbReference type="neXtProt" id="NX_P78337"/>
<dbReference type="OpenTargets" id="ENSG00000069011"/>
<dbReference type="Orphanet" id="1275">
    <property type="disease" value="Brachydactyly-elbow wrist dysplasia syndrome"/>
</dbReference>
<dbReference type="Orphanet" id="293144">
    <property type="disease" value="Familial clubfoot due to 5q31 microdeletion"/>
</dbReference>
<dbReference type="Orphanet" id="293150">
    <property type="disease" value="Familial clubfoot due to PITX1 point mutation"/>
</dbReference>
<dbReference type="Orphanet" id="498494">
    <property type="disease" value="Mirror-image polydactyly"/>
</dbReference>
<dbReference type="PharmGKB" id="PA33338"/>
<dbReference type="VEuPathDB" id="HostDB:ENSG00000069011"/>
<dbReference type="eggNOG" id="KOG0486">
    <property type="taxonomic scope" value="Eukaryota"/>
</dbReference>
<dbReference type="GeneTree" id="ENSGT00940000154518"/>
<dbReference type="HOGENOM" id="CLU_030301_0_0_1"/>
<dbReference type="InParanoid" id="P78337"/>
<dbReference type="OMA" id="YVDLGGM"/>
<dbReference type="OrthoDB" id="6159439at2759"/>
<dbReference type="PAN-GO" id="P78337">
    <property type="GO annotations" value="5 GO annotations based on evolutionary models"/>
</dbReference>
<dbReference type="PhylomeDB" id="P78337"/>
<dbReference type="TreeFam" id="TF351940"/>
<dbReference type="PathwayCommons" id="P78337"/>
<dbReference type="SignaLink" id="P78337"/>
<dbReference type="SIGNOR" id="P78337"/>
<dbReference type="BioGRID-ORCS" id="5307">
    <property type="hits" value="21 hits in 1179 CRISPR screens"/>
</dbReference>
<dbReference type="ChiTaRS" id="PITX1">
    <property type="organism name" value="human"/>
</dbReference>
<dbReference type="GeneWiki" id="PITX1"/>
<dbReference type="GenomeRNAi" id="5307"/>
<dbReference type="Pharos" id="P78337">
    <property type="development level" value="Tbio"/>
</dbReference>
<dbReference type="PRO" id="PR:P78337"/>
<dbReference type="Proteomes" id="UP000005640">
    <property type="component" value="Chromosome 5"/>
</dbReference>
<dbReference type="RNAct" id="P78337">
    <property type="molecule type" value="protein"/>
</dbReference>
<dbReference type="Bgee" id="ENSG00000069011">
    <property type="expression patterns" value="Expressed in lower esophagus mucosa and 121 other cell types or tissues"/>
</dbReference>
<dbReference type="ExpressionAtlas" id="P78337">
    <property type="expression patterns" value="baseline and differential"/>
</dbReference>
<dbReference type="GO" id="GO:0000785">
    <property type="term" value="C:chromatin"/>
    <property type="evidence" value="ECO:0000247"/>
    <property type="project" value="NTNU_SB"/>
</dbReference>
<dbReference type="GO" id="GO:0005737">
    <property type="term" value="C:cytoplasm"/>
    <property type="evidence" value="ECO:0007669"/>
    <property type="project" value="Ensembl"/>
</dbReference>
<dbReference type="GO" id="GO:0005634">
    <property type="term" value="C:nucleus"/>
    <property type="evidence" value="ECO:0000314"/>
    <property type="project" value="UniProtKB"/>
</dbReference>
<dbReference type="GO" id="GO:0005667">
    <property type="term" value="C:transcription regulator complex"/>
    <property type="evidence" value="ECO:0007669"/>
    <property type="project" value="Ensembl"/>
</dbReference>
<dbReference type="GO" id="GO:0001228">
    <property type="term" value="F:DNA-binding transcription activator activity, RNA polymerase II-specific"/>
    <property type="evidence" value="ECO:0007669"/>
    <property type="project" value="Ensembl"/>
</dbReference>
<dbReference type="GO" id="GO:0003700">
    <property type="term" value="F:DNA-binding transcription factor activity"/>
    <property type="evidence" value="ECO:0000250"/>
    <property type="project" value="UniProtKB"/>
</dbReference>
<dbReference type="GO" id="GO:0000981">
    <property type="term" value="F:DNA-binding transcription factor activity, RNA polymerase II-specific"/>
    <property type="evidence" value="ECO:0000247"/>
    <property type="project" value="NTNU_SB"/>
</dbReference>
<dbReference type="GO" id="GO:0000978">
    <property type="term" value="F:RNA polymerase II cis-regulatory region sequence-specific DNA binding"/>
    <property type="evidence" value="ECO:0000318"/>
    <property type="project" value="GO_Central"/>
</dbReference>
<dbReference type="GO" id="GO:0061629">
    <property type="term" value="F:RNA polymerase II-specific DNA-binding transcription factor binding"/>
    <property type="evidence" value="ECO:0000353"/>
    <property type="project" value="UniProtKB"/>
</dbReference>
<dbReference type="GO" id="GO:1990837">
    <property type="term" value="F:sequence-specific double-stranded DNA binding"/>
    <property type="evidence" value="ECO:0000314"/>
    <property type="project" value="ARUK-UCL"/>
</dbReference>
<dbReference type="GO" id="GO:0009653">
    <property type="term" value="P:anatomical structure morphogenesis"/>
    <property type="evidence" value="ECO:0000318"/>
    <property type="project" value="GO_Central"/>
</dbReference>
<dbReference type="GO" id="GO:0014707">
    <property type="term" value="P:branchiomeric skeletal muscle development"/>
    <property type="evidence" value="ECO:0007669"/>
    <property type="project" value="Ensembl"/>
</dbReference>
<dbReference type="GO" id="GO:0051216">
    <property type="term" value="P:cartilage development"/>
    <property type="evidence" value="ECO:0007669"/>
    <property type="project" value="Ensembl"/>
</dbReference>
<dbReference type="GO" id="GO:0035116">
    <property type="term" value="P:embryonic hindlimb morphogenesis"/>
    <property type="evidence" value="ECO:0007669"/>
    <property type="project" value="Ensembl"/>
</dbReference>
<dbReference type="GO" id="GO:0048625">
    <property type="term" value="P:myoblast fate commitment"/>
    <property type="evidence" value="ECO:0007669"/>
    <property type="project" value="Ensembl"/>
</dbReference>
<dbReference type="GO" id="GO:0045892">
    <property type="term" value="P:negative regulation of DNA-templated transcription"/>
    <property type="evidence" value="ECO:0007669"/>
    <property type="project" value="Ensembl"/>
</dbReference>
<dbReference type="GO" id="GO:0021983">
    <property type="term" value="P:pituitary gland development"/>
    <property type="evidence" value="ECO:0007669"/>
    <property type="project" value="Ensembl"/>
</dbReference>
<dbReference type="GO" id="GO:0006357">
    <property type="term" value="P:regulation of transcription by RNA polymerase II"/>
    <property type="evidence" value="ECO:0000318"/>
    <property type="project" value="GO_Central"/>
</dbReference>
<dbReference type="GO" id="GO:0001501">
    <property type="term" value="P:skeletal system development"/>
    <property type="evidence" value="ECO:0000304"/>
    <property type="project" value="ProtInc"/>
</dbReference>
<dbReference type="CDD" id="cd00086">
    <property type="entry name" value="homeodomain"/>
    <property type="match status" value="1"/>
</dbReference>
<dbReference type="FunFam" id="1.10.10.60:FF:000031">
    <property type="entry name" value="Homeobox protein"/>
    <property type="match status" value="1"/>
</dbReference>
<dbReference type="Gene3D" id="1.10.10.60">
    <property type="entry name" value="Homeodomain-like"/>
    <property type="match status" value="1"/>
</dbReference>
<dbReference type="InterPro" id="IPR001356">
    <property type="entry name" value="HD"/>
</dbReference>
<dbReference type="InterPro" id="IPR017970">
    <property type="entry name" value="Homeobox_CS"/>
</dbReference>
<dbReference type="InterPro" id="IPR016233">
    <property type="entry name" value="Homeobox_Pitx/unc30"/>
</dbReference>
<dbReference type="InterPro" id="IPR009057">
    <property type="entry name" value="Homeodomain-like_sf"/>
</dbReference>
<dbReference type="InterPro" id="IPR003654">
    <property type="entry name" value="OAR_dom"/>
</dbReference>
<dbReference type="PANTHER" id="PTHR45882:SF1">
    <property type="entry name" value="PITUITARY HOMEOBOX 1"/>
    <property type="match status" value="1"/>
</dbReference>
<dbReference type="PANTHER" id="PTHR45882">
    <property type="entry name" value="PITUITARY HOMEOBOX HOMOLOG PTX1"/>
    <property type="match status" value="1"/>
</dbReference>
<dbReference type="Pfam" id="PF00046">
    <property type="entry name" value="Homeodomain"/>
    <property type="match status" value="1"/>
</dbReference>
<dbReference type="Pfam" id="PF03826">
    <property type="entry name" value="OAR"/>
    <property type="match status" value="1"/>
</dbReference>
<dbReference type="PIRSF" id="PIRSF000563">
    <property type="entry name" value="Homeobox_protein_Pitx/Unc30"/>
    <property type="match status" value="1"/>
</dbReference>
<dbReference type="SMART" id="SM00389">
    <property type="entry name" value="HOX"/>
    <property type="match status" value="1"/>
</dbReference>
<dbReference type="SUPFAM" id="SSF46689">
    <property type="entry name" value="Homeodomain-like"/>
    <property type="match status" value="1"/>
</dbReference>
<dbReference type="PROSITE" id="PS00027">
    <property type="entry name" value="HOMEOBOX_1"/>
    <property type="match status" value="1"/>
</dbReference>
<dbReference type="PROSITE" id="PS50071">
    <property type="entry name" value="HOMEOBOX_2"/>
    <property type="match status" value="1"/>
</dbReference>
<dbReference type="PROSITE" id="PS50803">
    <property type="entry name" value="OAR"/>
    <property type="match status" value="1"/>
</dbReference>
<evidence type="ECO:0000250" key="1"/>
<evidence type="ECO:0000250" key="2">
    <source>
        <dbReference type="UniProtKB" id="P56673"/>
    </source>
</evidence>
<evidence type="ECO:0000255" key="3"/>
<evidence type="ECO:0000255" key="4">
    <source>
        <dbReference type="PROSITE-ProRule" id="PRU00108"/>
    </source>
</evidence>
<evidence type="ECO:0000255" key="5">
    <source>
        <dbReference type="PROSITE-ProRule" id="PRU00138"/>
    </source>
</evidence>
<evidence type="ECO:0000256" key="6">
    <source>
        <dbReference type="SAM" id="MobiDB-lite"/>
    </source>
</evidence>
<evidence type="ECO:0000269" key="7">
    <source>
    </source>
</evidence>
<evidence type="ECO:0000269" key="8">
    <source>
    </source>
</evidence>
<evidence type="ECO:0000269" key="9">
    <source>
    </source>
</evidence>
<evidence type="ECO:0000269" key="10">
    <source>
    </source>
</evidence>
<evidence type="ECO:0000269" key="11">
    <source>
    </source>
</evidence>
<evidence type="ECO:0000269" key="12">
    <source>
    </source>
</evidence>
<evidence type="ECO:0000269" key="13">
    <source>
    </source>
</evidence>
<evidence type="ECO:0000305" key="14"/>
<evidence type="ECO:0007744" key="15">
    <source>
    </source>
</evidence>
<evidence type="ECO:0007744" key="16">
    <source>
    </source>
</evidence>
<sequence>MDAFKGGMSLERLPEGLRPPPPPPHDMGPAFHLARPADPREPLENSASESSDTELPEKERGGEPKGPEDSGAGGTGCGGADDPAKKKKQRRQRTHFTSQQLQELEATFQRNRYPDMSMREEIAVWTNLTEPRVRVWFKNRRAKWRKRERNQQLDLCKGGYVPQFSGLVQPYEDVYAAGYSYNNWAAKSLAPAPLSTKSFTFFNSMSPLSSQSMFSAPSSISSMTMPSSMGPGAVPGMPNSGLNNINNLTGSSLNSAMSPGACPYGTPASPYSVYRDTCNSSLASLRLKSKQHSSFGYGGLQGPASGLNACQYNS</sequence>
<organism>
    <name type="scientific">Homo sapiens</name>
    <name type="common">Human</name>
    <dbReference type="NCBI Taxonomy" id="9606"/>
    <lineage>
        <taxon>Eukaryota</taxon>
        <taxon>Metazoa</taxon>
        <taxon>Chordata</taxon>
        <taxon>Craniata</taxon>
        <taxon>Vertebrata</taxon>
        <taxon>Euteleostomi</taxon>
        <taxon>Mammalia</taxon>
        <taxon>Eutheria</taxon>
        <taxon>Euarchontoglires</taxon>
        <taxon>Primates</taxon>
        <taxon>Haplorrhini</taxon>
        <taxon>Catarrhini</taxon>
        <taxon>Hominidae</taxon>
        <taxon>Homo</taxon>
    </lineage>
</organism>
<reference key="1">
    <citation type="journal article" date="1997" name="Genomics">
        <title>Backfoot, a novel homeobox gene, maps to human chromosome 5 (BFT) and mouse chromosome 13 (Bft).</title>
        <authorList>
            <person name="Shang J."/>
            <person name="Li X."/>
            <person name="Ring H.Z."/>
            <person name="Clayton D.A."/>
            <person name="Francke U."/>
        </authorList>
    </citation>
    <scope>NUCLEOTIDE SEQUENCE [MRNA]</scope>
</reference>
<reference key="2">
    <citation type="journal article" date="1997" name="Mamm. Genome">
        <title>Human and murine PTX1/Ptx1 gene maps to the region for Treacher Collins syndrome.</title>
        <authorList>
            <person name="Crawford M.J."/>
            <person name="Lanctot C."/>
            <person name="Tremblay J.J."/>
            <person name="Jenkins N.A."/>
            <person name="Gilbert D.J."/>
            <person name="Copeland N.G."/>
            <person name="Beatty B."/>
            <person name="Drouin J."/>
        </authorList>
    </citation>
    <scope>NUCLEOTIDE SEQUENCE [GENOMIC DNA]</scope>
</reference>
<reference key="3">
    <citation type="journal article" date="2004" name="Nat. Genet.">
        <title>Complete sequencing and characterization of 21,243 full-length human cDNAs.</title>
        <authorList>
            <person name="Ota T."/>
            <person name="Suzuki Y."/>
            <person name="Nishikawa T."/>
            <person name="Otsuki T."/>
            <person name="Sugiyama T."/>
            <person name="Irie R."/>
            <person name="Wakamatsu A."/>
            <person name="Hayashi K."/>
            <person name="Sato H."/>
            <person name="Nagai K."/>
            <person name="Kimura K."/>
            <person name="Makita H."/>
            <person name="Sekine M."/>
            <person name="Obayashi M."/>
            <person name="Nishi T."/>
            <person name="Shibahara T."/>
            <person name="Tanaka T."/>
            <person name="Ishii S."/>
            <person name="Yamamoto J."/>
            <person name="Saito K."/>
            <person name="Kawai Y."/>
            <person name="Isono Y."/>
            <person name="Nakamura Y."/>
            <person name="Nagahari K."/>
            <person name="Murakami K."/>
            <person name="Yasuda T."/>
            <person name="Iwayanagi T."/>
            <person name="Wagatsuma M."/>
            <person name="Shiratori A."/>
            <person name="Sudo H."/>
            <person name="Hosoiri T."/>
            <person name="Kaku Y."/>
            <person name="Kodaira H."/>
            <person name="Kondo H."/>
            <person name="Sugawara M."/>
            <person name="Takahashi M."/>
            <person name="Kanda K."/>
            <person name="Yokoi T."/>
            <person name="Furuya T."/>
            <person name="Kikkawa E."/>
            <person name="Omura Y."/>
            <person name="Abe K."/>
            <person name="Kamihara K."/>
            <person name="Katsuta N."/>
            <person name="Sato K."/>
            <person name="Tanikawa M."/>
            <person name="Yamazaki M."/>
            <person name="Ninomiya K."/>
            <person name="Ishibashi T."/>
            <person name="Yamashita H."/>
            <person name="Murakawa K."/>
            <person name="Fujimori K."/>
            <person name="Tanai H."/>
            <person name="Kimata M."/>
            <person name="Watanabe M."/>
            <person name="Hiraoka S."/>
            <person name="Chiba Y."/>
            <person name="Ishida S."/>
            <person name="Ono Y."/>
            <person name="Takiguchi S."/>
            <person name="Watanabe S."/>
            <person name="Yosida M."/>
            <person name="Hotuta T."/>
            <person name="Kusano J."/>
            <person name="Kanehori K."/>
            <person name="Takahashi-Fujii A."/>
            <person name="Hara H."/>
            <person name="Tanase T.-O."/>
            <person name="Nomura Y."/>
            <person name="Togiya S."/>
            <person name="Komai F."/>
            <person name="Hara R."/>
            <person name="Takeuchi K."/>
            <person name="Arita M."/>
            <person name="Imose N."/>
            <person name="Musashino K."/>
            <person name="Yuuki H."/>
            <person name="Oshima A."/>
            <person name="Sasaki N."/>
            <person name="Aotsuka S."/>
            <person name="Yoshikawa Y."/>
            <person name="Matsunawa H."/>
            <person name="Ichihara T."/>
            <person name="Shiohata N."/>
            <person name="Sano S."/>
            <person name="Moriya S."/>
            <person name="Momiyama H."/>
            <person name="Satoh N."/>
            <person name="Takami S."/>
            <person name="Terashima Y."/>
            <person name="Suzuki O."/>
            <person name="Nakagawa S."/>
            <person name="Senoh A."/>
            <person name="Mizoguchi H."/>
            <person name="Goto Y."/>
            <person name="Shimizu F."/>
            <person name="Wakebe H."/>
            <person name="Hishigaki H."/>
            <person name="Watanabe T."/>
            <person name="Sugiyama A."/>
            <person name="Takemoto M."/>
            <person name="Kawakami B."/>
            <person name="Yamazaki M."/>
            <person name="Watanabe K."/>
            <person name="Kumagai A."/>
            <person name="Itakura S."/>
            <person name="Fukuzumi Y."/>
            <person name="Fujimori Y."/>
            <person name="Komiyama M."/>
            <person name="Tashiro H."/>
            <person name="Tanigami A."/>
            <person name="Fujiwara T."/>
            <person name="Ono T."/>
            <person name="Yamada K."/>
            <person name="Fujii Y."/>
            <person name="Ozaki K."/>
            <person name="Hirao M."/>
            <person name="Ohmori Y."/>
            <person name="Kawabata A."/>
            <person name="Hikiji T."/>
            <person name="Kobatake N."/>
            <person name="Inagaki H."/>
            <person name="Ikema Y."/>
            <person name="Okamoto S."/>
            <person name="Okitani R."/>
            <person name="Kawakami T."/>
            <person name="Noguchi S."/>
            <person name="Itoh T."/>
            <person name="Shigeta K."/>
            <person name="Senba T."/>
            <person name="Matsumura K."/>
            <person name="Nakajima Y."/>
            <person name="Mizuno T."/>
            <person name="Morinaga M."/>
            <person name="Sasaki M."/>
            <person name="Togashi T."/>
            <person name="Oyama M."/>
            <person name="Hata H."/>
            <person name="Watanabe M."/>
            <person name="Komatsu T."/>
            <person name="Mizushima-Sugano J."/>
            <person name="Satoh T."/>
            <person name="Shirai Y."/>
            <person name="Takahashi Y."/>
            <person name="Nakagawa K."/>
            <person name="Okumura K."/>
            <person name="Nagase T."/>
            <person name="Nomura N."/>
            <person name="Kikuchi H."/>
            <person name="Masuho Y."/>
            <person name="Yamashita R."/>
            <person name="Nakai K."/>
            <person name="Yada T."/>
            <person name="Nakamura Y."/>
            <person name="Ohara O."/>
            <person name="Isogai T."/>
            <person name="Sugano S."/>
        </authorList>
    </citation>
    <scope>NUCLEOTIDE SEQUENCE [LARGE SCALE MRNA]</scope>
    <scope>VARIANT ALA-299</scope>
    <source>
        <tissue>Embryo</tissue>
    </source>
</reference>
<reference key="4">
    <citation type="journal article" date="2004" name="Nature">
        <title>The DNA sequence and comparative analysis of human chromosome 5.</title>
        <authorList>
            <person name="Schmutz J."/>
            <person name="Martin J."/>
            <person name="Terry A."/>
            <person name="Couronne O."/>
            <person name="Grimwood J."/>
            <person name="Lowry S."/>
            <person name="Gordon L.A."/>
            <person name="Scott D."/>
            <person name="Xie G."/>
            <person name="Huang W."/>
            <person name="Hellsten U."/>
            <person name="Tran-Gyamfi M."/>
            <person name="She X."/>
            <person name="Prabhakar S."/>
            <person name="Aerts A."/>
            <person name="Altherr M."/>
            <person name="Bajorek E."/>
            <person name="Black S."/>
            <person name="Branscomb E."/>
            <person name="Caoile C."/>
            <person name="Challacombe J.F."/>
            <person name="Chan Y.M."/>
            <person name="Denys M."/>
            <person name="Detter J.C."/>
            <person name="Escobar J."/>
            <person name="Flowers D."/>
            <person name="Fotopulos D."/>
            <person name="Glavina T."/>
            <person name="Gomez M."/>
            <person name="Gonzales E."/>
            <person name="Goodstein D."/>
            <person name="Grigoriev I."/>
            <person name="Groza M."/>
            <person name="Hammon N."/>
            <person name="Hawkins T."/>
            <person name="Haydu L."/>
            <person name="Israni S."/>
            <person name="Jett J."/>
            <person name="Kadner K."/>
            <person name="Kimball H."/>
            <person name="Kobayashi A."/>
            <person name="Lopez F."/>
            <person name="Lou Y."/>
            <person name="Martinez D."/>
            <person name="Medina C."/>
            <person name="Morgan J."/>
            <person name="Nandkeshwar R."/>
            <person name="Noonan J.P."/>
            <person name="Pitluck S."/>
            <person name="Pollard M."/>
            <person name="Predki P."/>
            <person name="Priest J."/>
            <person name="Ramirez L."/>
            <person name="Retterer J."/>
            <person name="Rodriguez A."/>
            <person name="Rogers S."/>
            <person name="Salamov A."/>
            <person name="Salazar A."/>
            <person name="Thayer N."/>
            <person name="Tice H."/>
            <person name="Tsai M."/>
            <person name="Ustaszewska A."/>
            <person name="Vo N."/>
            <person name="Wheeler J."/>
            <person name="Wu K."/>
            <person name="Yang J."/>
            <person name="Dickson M."/>
            <person name="Cheng J.-F."/>
            <person name="Eichler E.E."/>
            <person name="Olsen A."/>
            <person name="Pennacchio L.A."/>
            <person name="Rokhsar D.S."/>
            <person name="Richardson P."/>
            <person name="Lucas S.M."/>
            <person name="Myers R.M."/>
            <person name="Rubin E.M."/>
        </authorList>
    </citation>
    <scope>NUCLEOTIDE SEQUENCE [LARGE SCALE GENOMIC DNA]</scope>
    <scope>VARIANT ALA-299</scope>
</reference>
<reference key="5">
    <citation type="submission" date="2005-09" db="EMBL/GenBank/DDBJ databases">
        <authorList>
            <person name="Mural R.J."/>
            <person name="Istrail S."/>
            <person name="Sutton G.G."/>
            <person name="Florea L."/>
            <person name="Halpern A.L."/>
            <person name="Mobarry C.M."/>
            <person name="Lippert R."/>
            <person name="Walenz B."/>
            <person name="Shatkay H."/>
            <person name="Dew I."/>
            <person name="Miller J.R."/>
            <person name="Flanigan M.J."/>
            <person name="Edwards N.J."/>
            <person name="Bolanos R."/>
            <person name="Fasulo D."/>
            <person name="Halldorsson B.V."/>
            <person name="Hannenhalli S."/>
            <person name="Turner R."/>
            <person name="Yooseph S."/>
            <person name="Lu F."/>
            <person name="Nusskern D.R."/>
            <person name="Shue B.C."/>
            <person name="Zheng X.H."/>
            <person name="Zhong F."/>
            <person name="Delcher A.L."/>
            <person name="Huson D.H."/>
            <person name="Kravitz S.A."/>
            <person name="Mouchard L."/>
            <person name="Reinert K."/>
            <person name="Remington K.A."/>
            <person name="Clark A.G."/>
            <person name="Waterman M.S."/>
            <person name="Eichler E.E."/>
            <person name="Adams M.D."/>
            <person name="Hunkapiller M.W."/>
            <person name="Myers E.W."/>
            <person name="Venter J.C."/>
        </authorList>
    </citation>
    <scope>NUCLEOTIDE SEQUENCE [LARGE SCALE GENOMIC DNA]</scope>
</reference>
<reference key="6">
    <citation type="journal article" date="2004" name="Genome Res.">
        <title>The status, quality, and expansion of the NIH full-length cDNA project: the Mammalian Gene Collection (MGC).</title>
        <authorList>
            <consortium name="The MGC Project Team"/>
        </authorList>
    </citation>
    <scope>NUCLEOTIDE SEQUENCE [LARGE SCALE MRNA]</scope>
    <scope>VARIANT ALA-299</scope>
    <source>
        <tissue>Pancreas</tissue>
        <tissue>Placenta</tissue>
    </source>
</reference>
<reference key="7">
    <citation type="journal article" date="2008" name="Proc. Natl. Acad. Sci. U.S.A.">
        <title>A quantitative atlas of mitotic phosphorylation.</title>
        <authorList>
            <person name="Dephoure N."/>
            <person name="Zhou C."/>
            <person name="Villen J."/>
            <person name="Beausoleil S.A."/>
            <person name="Bakalarski C.E."/>
            <person name="Elledge S.J."/>
            <person name="Gygi S.P."/>
        </authorList>
    </citation>
    <scope>PHOSPHORYLATION [LARGE SCALE ANALYSIS] AT SER-46 AND SER-48</scope>
    <scope>IDENTIFICATION BY MASS SPECTROMETRY [LARGE SCALE ANALYSIS]</scope>
    <source>
        <tissue>Cervix carcinoma</tissue>
    </source>
</reference>
<reference key="8">
    <citation type="journal article" date="2012" name="Am. J. Hum. Genet.">
        <title>Homeotic arm-to-leg transformation associated with genomic rearrangements at the PITX1 locus.</title>
        <authorList>
            <person name="Spielmann M."/>
            <person name="Brancati F."/>
            <person name="Krawitz P.M."/>
            <person name="Robinson P.N."/>
            <person name="Ibrahim D.M."/>
            <person name="Franke M."/>
            <person name="Hecht J."/>
            <person name="Lohan S."/>
            <person name="Dathe K."/>
            <person name="Nardone A.M."/>
            <person name="Ferrari P."/>
            <person name="Landi A."/>
            <person name="Wittler L."/>
            <person name="Timmermann B."/>
            <person name="Chan D."/>
            <person name="Mennen U."/>
            <person name="Klopocki E."/>
            <person name="Mundlos S."/>
        </authorList>
    </citation>
    <scope>INVOLVEMENT IN LBNBG</scope>
</reference>
<reference key="9">
    <citation type="journal article" date="2012" name="Eur. J. Hum. Genet.">
        <title>Deletions in PITX1 cause a spectrum of lower-limb malformations including mirror-image polydactyly.</title>
        <authorList>
            <person name="Klopocki E."/>
            <person name="Kahler C."/>
            <person name="Foulds N."/>
            <person name="Shah H."/>
            <person name="Joseph B."/>
            <person name="Vogel H."/>
            <person name="Luttgen S."/>
            <person name="Bald R."/>
            <person name="Besoke R."/>
            <person name="Held K."/>
            <person name="Mundlos S."/>
            <person name="Kurth I."/>
        </authorList>
    </citation>
    <scope>INVOLVEMENT IN CCF</scope>
</reference>
<reference key="10">
    <citation type="journal article" date="2012" name="Proc. Natl. Acad. Sci. U.S.A.">
        <title>N-terminal acetylome analyses and functional insights of the N-terminal acetyltransferase NatB.</title>
        <authorList>
            <person name="Van Damme P."/>
            <person name="Lasa M."/>
            <person name="Polevoda B."/>
            <person name="Gazquez C."/>
            <person name="Elosegui-Artola A."/>
            <person name="Kim D.S."/>
            <person name="De Juan-Pardo E."/>
            <person name="Demeyer K."/>
            <person name="Hole K."/>
            <person name="Larrea E."/>
            <person name="Timmerman E."/>
            <person name="Prieto J."/>
            <person name="Arnesen T."/>
            <person name="Sherman F."/>
            <person name="Gevaert K."/>
            <person name="Aldabe R."/>
        </authorList>
    </citation>
    <scope>ACETYLATION [LARGE SCALE ANALYSIS] AT MET-1</scope>
    <scope>IDENTIFICATION BY MASS SPECTROMETRY [LARGE SCALE ANALYSIS]</scope>
</reference>
<reference key="11">
    <citation type="journal article" date="2016" name="Hum. Mol. Genet.">
        <title>Functional characterization of a human POU1F1 mutation associated with isolated growth hormone deficiency: a novel etiology for IGHD.</title>
        <authorList>
            <person name="Sobrier M.L."/>
            <person name="Tsai Y.C."/>
            <person name="Perez C."/>
            <person name="Leheup B."/>
            <person name="Bouceba T."/>
            <person name="Duquesnoy P."/>
            <person name="Copin B."/>
            <person name="Sizova D."/>
            <person name="Penzo A."/>
            <person name="Stanger B.Z."/>
            <person name="Cooke N.E."/>
            <person name="Liebhaber S.A."/>
            <person name="Amselem S."/>
        </authorList>
    </citation>
    <scope>INTERACTION WITH POU1F1</scope>
</reference>
<reference key="12">
    <citation type="journal article" date="2008" name="Am. J. Hum. Genet.">
        <title>Asymmetric lower-limb malformations in individuals with homeobox PITX1 gene mutation.</title>
        <authorList>
            <person name="Gurnett C.A."/>
            <person name="Alaee F."/>
            <person name="Kruse L.M."/>
            <person name="Desruisseau D.M."/>
            <person name="Hecht J.T."/>
            <person name="Wise C.A."/>
            <person name="Bowcock A.M."/>
            <person name="Dobbs M.B."/>
        </authorList>
    </citation>
    <scope>VARIANT CCF LYS-130</scope>
    <scope>CHARACTERIZATION OF VARIANT CCF LYS-130</scope>
</reference>
<feature type="chain" id="PRO_0000049218" description="Pituitary homeobox 1">
    <location>
        <begin position="1"/>
        <end position="314"/>
    </location>
</feature>
<feature type="DNA-binding region" description="Homeobox" evidence="4">
    <location>
        <begin position="89"/>
        <end position="148"/>
    </location>
</feature>
<feature type="region of interest" description="Disordered" evidence="6">
    <location>
        <begin position="1"/>
        <end position="103"/>
    </location>
</feature>
<feature type="region of interest" description="Interaction with PIT-1" evidence="1">
    <location>
        <begin position="147"/>
        <end position="279"/>
    </location>
</feature>
<feature type="short sequence motif" description="OAR" evidence="5">
    <location>
        <begin position="280"/>
        <end position="293"/>
    </location>
</feature>
<feature type="short sequence motif" description="Nuclear localization signal" evidence="3">
    <location>
        <begin position="286"/>
        <end position="290"/>
    </location>
</feature>
<feature type="compositionally biased region" description="Pro residues" evidence="6">
    <location>
        <begin position="17"/>
        <end position="26"/>
    </location>
</feature>
<feature type="compositionally biased region" description="Basic and acidic residues" evidence="6">
    <location>
        <begin position="55"/>
        <end position="68"/>
    </location>
</feature>
<feature type="compositionally biased region" description="Basic residues" evidence="6">
    <location>
        <begin position="85"/>
        <end position="94"/>
    </location>
</feature>
<feature type="modified residue" description="N-acetylmethionine" evidence="16">
    <location>
        <position position="1"/>
    </location>
</feature>
<feature type="modified residue" description="Phosphoserine" evidence="15">
    <location>
        <position position="46"/>
    </location>
</feature>
<feature type="modified residue" description="Phosphoserine" evidence="15">
    <location>
        <position position="48"/>
    </location>
</feature>
<feature type="sequence variant" id="VAR_058113" description="In CCF; reduces the ability to transactivate a luciferase reporter gene; suppresses wild-type activity in a dose-dependent manner; dbSNP:rs121909109." evidence="10">
    <original>E</original>
    <variation>K</variation>
    <location>
        <position position="130"/>
    </location>
</feature>
<feature type="sequence variant" id="VAR_049586" description="In dbSNP:rs479632." evidence="7 8 9">
    <original>G</original>
    <variation>A</variation>
    <location>
        <position position="299"/>
    </location>
</feature>
<feature type="sequence conflict" description="In Ref. 1; AAC51126." evidence="14" ref="1">
    <original>L</original>
    <variation>F</variation>
    <location>
        <position position="17"/>
    </location>
</feature>